<reference key="1">
    <citation type="journal article" date="1999" name="Biosci. Biotechnol. Biochem.">
        <title>Accelerated evolution in the protein-coding region of galectin cDNAs, congerin I and congerin II, from skin mucus of conger eel (Conger myriaster).</title>
        <authorList>
            <person name="Ogawa T."/>
            <person name="Ishii C."/>
            <person name="Kagawa D."/>
            <person name="Muramoto K."/>
            <person name="Kamiya H."/>
        </authorList>
    </citation>
    <scope>NUCLEOTIDE SEQUENCE [MRNA]</scope>
</reference>
<reference key="2">
    <citation type="journal article" date="1999" name="Comp. Biochem. Physiol.">
        <title>Functional and structural characterization of multiple galectins from the skin mucus of conger eel, Conger myriaster.</title>
        <authorList>
            <person name="Muramoto K."/>
            <person name="Kagawa D."/>
            <person name="Sato T."/>
            <person name="Ogawa T."/>
            <person name="Nishida Y."/>
            <person name="Kamiya H."/>
        </authorList>
    </citation>
    <scope>PROTEIN SEQUENCE OF 2-136</scope>
    <scope>ACETYLATION AT SER-2</scope>
    <source>
        <tissue>Skin mucus</tissue>
    </source>
</reference>
<reference key="3">
    <citation type="journal article" date="2002" name="J. Mol. Biol.">
        <title>Crystal structure of a conger eel galectin (congerin II) at 1.45A resolution: implication for the accelerated evolution of a new ligand-binding site following gene duplication.</title>
        <authorList>
            <person name="Shirai T."/>
            <person name="Matsui Y."/>
            <person name="Shionyu-Mitsuyama C."/>
            <person name="Yamane T."/>
            <person name="Kamiya H."/>
            <person name="Ishii C."/>
            <person name="Ogawa T."/>
            <person name="Muramoto K."/>
        </authorList>
    </citation>
    <scope>X-RAY CRYSTALLOGRAPHY (1.45 ANGSTROMS) IN COMPLEX WITH LACTOSE</scope>
</reference>
<evidence type="ECO:0000255" key="1"/>
<evidence type="ECO:0000255" key="2">
    <source>
        <dbReference type="PROSITE-ProRule" id="PRU00639"/>
    </source>
</evidence>
<evidence type="ECO:0000269" key="3">
    <source>
    </source>
</evidence>
<evidence type="ECO:0000269" key="4">
    <source>
    </source>
</evidence>
<evidence type="ECO:0007829" key="5">
    <source>
        <dbReference type="PDB" id="1IS3"/>
    </source>
</evidence>
<accession>Q9YIC2</accession>
<organism>
    <name type="scientific">Conger myriaster</name>
    <name type="common">Conger eel</name>
    <dbReference type="NCBI Taxonomy" id="7943"/>
    <lineage>
        <taxon>Eukaryota</taxon>
        <taxon>Metazoa</taxon>
        <taxon>Chordata</taxon>
        <taxon>Craniata</taxon>
        <taxon>Vertebrata</taxon>
        <taxon>Euteleostomi</taxon>
        <taxon>Actinopterygii</taxon>
        <taxon>Neopterygii</taxon>
        <taxon>Teleostei</taxon>
        <taxon>Anguilliformes</taxon>
        <taxon>Congridae</taxon>
        <taxon>Conger</taxon>
    </lineage>
</organism>
<dbReference type="EMBL" id="AB010277">
    <property type="protein sequence ID" value="BAA36386.1"/>
    <property type="molecule type" value="mRNA"/>
</dbReference>
<dbReference type="PDB" id="1IS3">
    <property type="method" value="X-ray"/>
    <property type="resolution" value="1.45 A"/>
    <property type="chains" value="A=2-136"/>
</dbReference>
<dbReference type="PDB" id="1IS4">
    <property type="method" value="X-ray"/>
    <property type="resolution" value="1.90 A"/>
    <property type="chains" value="A=2-136"/>
</dbReference>
<dbReference type="PDB" id="1IS5">
    <property type="method" value="X-ray"/>
    <property type="resolution" value="2.00 A"/>
    <property type="chains" value="A=2-136"/>
</dbReference>
<dbReference type="PDB" id="1IS6">
    <property type="method" value="X-ray"/>
    <property type="resolution" value="1.70 A"/>
    <property type="chains" value="A=2-136"/>
</dbReference>
<dbReference type="PDB" id="1WLC">
    <property type="method" value="X-ray"/>
    <property type="resolution" value="2.00 A"/>
    <property type="chains" value="A=2-136"/>
</dbReference>
<dbReference type="PDB" id="1WLD">
    <property type="method" value="X-ray"/>
    <property type="resolution" value="1.60 A"/>
    <property type="chains" value="A=2-136"/>
</dbReference>
<dbReference type="PDB" id="1WLW">
    <property type="method" value="X-ray"/>
    <property type="resolution" value="1.80 A"/>
    <property type="chains" value="A=2-136"/>
</dbReference>
<dbReference type="PDBsum" id="1IS3"/>
<dbReference type="PDBsum" id="1IS4"/>
<dbReference type="PDBsum" id="1IS5"/>
<dbReference type="PDBsum" id="1IS6"/>
<dbReference type="PDBsum" id="1WLC"/>
<dbReference type="PDBsum" id="1WLD"/>
<dbReference type="PDBsum" id="1WLW"/>
<dbReference type="SMR" id="Q9YIC2"/>
<dbReference type="UniLectin" id="Q9YIC2"/>
<dbReference type="iPTMnet" id="Q9YIC2"/>
<dbReference type="EvolutionaryTrace" id="Q9YIC2"/>
<dbReference type="GO" id="GO:0005615">
    <property type="term" value="C:extracellular space"/>
    <property type="evidence" value="ECO:0007669"/>
    <property type="project" value="TreeGrafter"/>
</dbReference>
<dbReference type="GO" id="GO:0030246">
    <property type="term" value="F:carbohydrate binding"/>
    <property type="evidence" value="ECO:0007669"/>
    <property type="project" value="UniProtKB-KW"/>
</dbReference>
<dbReference type="GO" id="GO:0016936">
    <property type="term" value="F:galactoside binding"/>
    <property type="evidence" value="ECO:0007669"/>
    <property type="project" value="TreeGrafter"/>
</dbReference>
<dbReference type="GO" id="GO:0043236">
    <property type="term" value="F:laminin binding"/>
    <property type="evidence" value="ECO:0007669"/>
    <property type="project" value="TreeGrafter"/>
</dbReference>
<dbReference type="CDD" id="cd00070">
    <property type="entry name" value="GLECT"/>
    <property type="match status" value="1"/>
</dbReference>
<dbReference type="FunFam" id="2.60.120.200:FF:000021">
    <property type="entry name" value="Galectin"/>
    <property type="match status" value="1"/>
</dbReference>
<dbReference type="Gene3D" id="2.60.120.200">
    <property type="match status" value="1"/>
</dbReference>
<dbReference type="InterPro" id="IPR013320">
    <property type="entry name" value="ConA-like_dom_sf"/>
</dbReference>
<dbReference type="InterPro" id="IPR044156">
    <property type="entry name" value="Galectin-like"/>
</dbReference>
<dbReference type="InterPro" id="IPR001079">
    <property type="entry name" value="Galectin_CRD"/>
</dbReference>
<dbReference type="PANTHER" id="PTHR11346">
    <property type="entry name" value="GALECTIN"/>
    <property type="match status" value="1"/>
</dbReference>
<dbReference type="PANTHER" id="PTHR11346:SF97">
    <property type="entry name" value="GALECTIN-1"/>
    <property type="match status" value="1"/>
</dbReference>
<dbReference type="Pfam" id="PF00337">
    <property type="entry name" value="Gal-bind_lectin"/>
    <property type="match status" value="1"/>
</dbReference>
<dbReference type="SMART" id="SM00908">
    <property type="entry name" value="Gal-bind_lectin"/>
    <property type="match status" value="1"/>
</dbReference>
<dbReference type="SMART" id="SM00276">
    <property type="entry name" value="GLECT"/>
    <property type="match status" value="1"/>
</dbReference>
<dbReference type="SUPFAM" id="SSF49899">
    <property type="entry name" value="Concanavalin A-like lectins/glucanases"/>
    <property type="match status" value="1"/>
</dbReference>
<dbReference type="PROSITE" id="PS51304">
    <property type="entry name" value="GALECTIN"/>
    <property type="match status" value="1"/>
</dbReference>
<comment type="function">
    <text>This protein binds beta-galactoside. Its physiological function is not yet known.</text>
</comment>
<comment type="subunit">
    <text evidence="4">Homodimer.</text>
</comment>
<protein>
    <recommendedName>
        <fullName>Congerin-2</fullName>
    </recommendedName>
    <alternativeName>
        <fullName>Beta-galactoside-binding lectin 2</fullName>
    </alternativeName>
    <alternativeName>
        <fullName>Congerin II</fullName>
    </alternativeName>
</protein>
<feature type="initiator methionine" description="Removed" evidence="3">
    <location>
        <position position="1"/>
    </location>
</feature>
<feature type="chain" id="PRO_0000076955" description="Congerin-2">
    <location>
        <begin position="2"/>
        <end position="136"/>
    </location>
</feature>
<feature type="domain" description="Galectin" evidence="2">
    <location>
        <begin position="4"/>
        <end position="136"/>
    </location>
</feature>
<feature type="binding site" evidence="1">
    <location>
        <begin position="70"/>
        <end position="76"/>
    </location>
    <ligand>
        <name>a beta-D-galactoside</name>
        <dbReference type="ChEBI" id="CHEBI:28034"/>
    </ligand>
</feature>
<feature type="modified residue" description="N-acetylserine" evidence="3">
    <location>
        <position position="2"/>
    </location>
</feature>
<feature type="strand" evidence="5">
    <location>
        <begin position="5"/>
        <end position="13"/>
    </location>
</feature>
<feature type="strand" evidence="5">
    <location>
        <begin position="18"/>
        <end position="24"/>
    </location>
</feature>
<feature type="strand" evidence="5">
    <location>
        <begin position="30"/>
        <end position="38"/>
    </location>
</feature>
<feature type="strand" evidence="5">
    <location>
        <begin position="41"/>
        <end position="52"/>
    </location>
</feature>
<feature type="strand" evidence="5">
    <location>
        <begin position="57"/>
        <end position="65"/>
    </location>
</feature>
<feature type="turn" evidence="5">
    <location>
        <begin position="66"/>
        <end position="68"/>
    </location>
</feature>
<feature type="strand" evidence="5">
    <location>
        <begin position="74"/>
        <end position="76"/>
    </location>
</feature>
<feature type="strand" evidence="5">
    <location>
        <begin position="85"/>
        <end position="93"/>
    </location>
</feature>
<feature type="strand" evidence="5">
    <location>
        <begin position="95"/>
        <end position="101"/>
    </location>
</feature>
<feature type="strand" evidence="5">
    <location>
        <begin position="107"/>
        <end position="111"/>
    </location>
</feature>
<feature type="strand" evidence="5">
    <location>
        <begin position="117"/>
        <end position="135"/>
    </location>
</feature>
<sequence>MSDRAEVRNIPFKLGMYLTVGGVVNSNATRFSINVGESTDSIAMHMDHRFSYGADQNVLVLNSLVHNVGWQQEERSKKFPFTKGDHFQTTITFDTHTFYIQLSNGETVEFPNRNKDAAFNLIYLAGDARLTFVRLE</sequence>
<keyword id="KW-0002">3D-structure</keyword>
<keyword id="KW-0007">Acetylation</keyword>
<keyword id="KW-0903">Direct protein sequencing</keyword>
<keyword id="KW-0430">Lectin</keyword>
<proteinExistence type="evidence at protein level"/>
<name>LEG2_CONMY</name>